<name>URK_SHIFL</name>
<gene>
    <name type="primary">udk</name>
    <name type="ordered locus">SF2130</name>
    <name type="ordered locus">S2254</name>
</gene>
<organism>
    <name type="scientific">Shigella flexneri</name>
    <dbReference type="NCBI Taxonomy" id="623"/>
    <lineage>
        <taxon>Bacteria</taxon>
        <taxon>Pseudomonadati</taxon>
        <taxon>Pseudomonadota</taxon>
        <taxon>Gammaproteobacteria</taxon>
        <taxon>Enterobacterales</taxon>
        <taxon>Enterobacteriaceae</taxon>
        <taxon>Shigella</taxon>
    </lineage>
</organism>
<comment type="catalytic activity">
    <reaction>
        <text>uridine + ATP = UMP + ADP + H(+)</text>
        <dbReference type="Rhea" id="RHEA:16825"/>
        <dbReference type="ChEBI" id="CHEBI:15378"/>
        <dbReference type="ChEBI" id="CHEBI:16704"/>
        <dbReference type="ChEBI" id="CHEBI:30616"/>
        <dbReference type="ChEBI" id="CHEBI:57865"/>
        <dbReference type="ChEBI" id="CHEBI:456216"/>
        <dbReference type="EC" id="2.7.1.48"/>
    </reaction>
</comment>
<comment type="catalytic activity">
    <reaction>
        <text>cytidine + ATP = CMP + ADP + H(+)</text>
        <dbReference type="Rhea" id="RHEA:24674"/>
        <dbReference type="ChEBI" id="CHEBI:15378"/>
        <dbReference type="ChEBI" id="CHEBI:17562"/>
        <dbReference type="ChEBI" id="CHEBI:30616"/>
        <dbReference type="ChEBI" id="CHEBI:60377"/>
        <dbReference type="ChEBI" id="CHEBI:456216"/>
        <dbReference type="EC" id="2.7.1.48"/>
    </reaction>
</comment>
<comment type="pathway">
    <text>Pyrimidine metabolism; CTP biosynthesis via salvage pathway; CTP from cytidine: step 1/3.</text>
</comment>
<comment type="pathway">
    <text>Pyrimidine metabolism; UMP biosynthesis via salvage pathway; UMP from uridine: step 1/1.</text>
</comment>
<comment type="subunit">
    <text evidence="1">Homotetramer.</text>
</comment>
<comment type="subcellular location">
    <subcellularLocation>
        <location evidence="1">Cytoplasm</location>
    </subcellularLocation>
</comment>
<comment type="similarity">
    <text evidence="3">Belongs to the uridine kinase family.</text>
</comment>
<protein>
    <recommendedName>
        <fullName>Uridine kinase</fullName>
        <ecNumber>2.7.1.48</ecNumber>
    </recommendedName>
    <alternativeName>
        <fullName>Cytidine monophosphokinase</fullName>
    </alternativeName>
    <alternativeName>
        <fullName>Uridine monophosphokinase</fullName>
    </alternativeName>
</protein>
<reference key="1">
    <citation type="journal article" date="2002" name="Nucleic Acids Res.">
        <title>Genome sequence of Shigella flexneri 2a: insights into pathogenicity through comparison with genomes of Escherichia coli K12 and O157.</title>
        <authorList>
            <person name="Jin Q."/>
            <person name="Yuan Z."/>
            <person name="Xu J."/>
            <person name="Wang Y."/>
            <person name="Shen Y."/>
            <person name="Lu W."/>
            <person name="Wang J."/>
            <person name="Liu H."/>
            <person name="Yang J."/>
            <person name="Yang F."/>
            <person name="Zhang X."/>
            <person name="Zhang J."/>
            <person name="Yang G."/>
            <person name="Wu H."/>
            <person name="Qu D."/>
            <person name="Dong J."/>
            <person name="Sun L."/>
            <person name="Xue Y."/>
            <person name="Zhao A."/>
            <person name="Gao Y."/>
            <person name="Zhu J."/>
            <person name="Kan B."/>
            <person name="Ding K."/>
            <person name="Chen S."/>
            <person name="Cheng H."/>
            <person name="Yao Z."/>
            <person name="He B."/>
            <person name="Chen R."/>
            <person name="Ma D."/>
            <person name="Qiang B."/>
            <person name="Wen Y."/>
            <person name="Hou Y."/>
            <person name="Yu J."/>
        </authorList>
    </citation>
    <scope>NUCLEOTIDE SEQUENCE [LARGE SCALE GENOMIC DNA]</scope>
    <source>
        <strain>301 / Serotype 2a</strain>
    </source>
</reference>
<reference key="2">
    <citation type="journal article" date="2003" name="Infect. Immun.">
        <title>Complete genome sequence and comparative genomics of Shigella flexneri serotype 2a strain 2457T.</title>
        <authorList>
            <person name="Wei J."/>
            <person name="Goldberg M.B."/>
            <person name="Burland V."/>
            <person name="Venkatesan M.M."/>
            <person name="Deng W."/>
            <person name="Fournier G."/>
            <person name="Mayhew G.F."/>
            <person name="Plunkett G. III"/>
            <person name="Rose D.J."/>
            <person name="Darling A."/>
            <person name="Mau B."/>
            <person name="Perna N.T."/>
            <person name="Payne S.M."/>
            <person name="Runyen-Janecky L.J."/>
            <person name="Zhou S."/>
            <person name="Schwartz D.C."/>
            <person name="Blattner F.R."/>
        </authorList>
    </citation>
    <scope>NUCLEOTIDE SEQUENCE [LARGE SCALE GENOMIC DNA]</scope>
    <source>
        <strain>ATCC 700930 / 2457T / Serotype 2a</strain>
    </source>
</reference>
<sequence length="213" mass="24353">MTDQSHQCVIIGIAGASASGKSLIASTLYRELREQVGDEHIGVIPEDCYYKDQSHLSMEERVKTNYDHPSAMDHSLLLEHLQALKRGSAIDLPVYSYVEHTRMKETVTVEPKKVIILEGILLLTDARLRDELNFSIFVDTPLDICLMRRIKRDVNERGRSMDSVMAQYQKTVRPMFLQFIEPSKQYADIIVPRGGKNRIAIDILKAKISQFFE</sequence>
<accession>P0A8F7</accession>
<accession>P31218</accession>
<accession>P78085</accession>
<accession>Q8X7L3</accession>
<keyword id="KW-0067">ATP-binding</keyword>
<keyword id="KW-0963">Cytoplasm</keyword>
<keyword id="KW-0418">Kinase</keyword>
<keyword id="KW-0547">Nucleotide-binding</keyword>
<keyword id="KW-1185">Reference proteome</keyword>
<keyword id="KW-0808">Transferase</keyword>
<dbReference type="EC" id="2.7.1.48"/>
<dbReference type="EMBL" id="AE005674">
    <property type="protein sequence ID" value="AAN43667.1"/>
    <property type="molecule type" value="Genomic_DNA"/>
</dbReference>
<dbReference type="EMBL" id="AE014073">
    <property type="protein sequence ID" value="AAP17495.1"/>
    <property type="molecule type" value="Genomic_DNA"/>
</dbReference>
<dbReference type="RefSeq" id="NP_707960.1">
    <property type="nucleotide sequence ID" value="NC_004337.2"/>
</dbReference>
<dbReference type="RefSeq" id="WP_001295424.1">
    <property type="nucleotide sequence ID" value="NZ_WPGW01000038.1"/>
</dbReference>
<dbReference type="SMR" id="P0A8F7"/>
<dbReference type="STRING" id="198214.SF2130"/>
<dbReference type="PaxDb" id="198214-SF2130"/>
<dbReference type="GeneID" id="1025324"/>
<dbReference type="GeneID" id="93775125"/>
<dbReference type="KEGG" id="sfl:SF2130"/>
<dbReference type="KEGG" id="sfx:S2254"/>
<dbReference type="PATRIC" id="fig|198214.7.peg.2540"/>
<dbReference type="HOGENOM" id="CLU_021278_1_2_6"/>
<dbReference type="UniPathway" id="UPA00574">
    <property type="reaction ID" value="UER00637"/>
</dbReference>
<dbReference type="UniPathway" id="UPA00579">
    <property type="reaction ID" value="UER00640"/>
</dbReference>
<dbReference type="Proteomes" id="UP000001006">
    <property type="component" value="Chromosome"/>
</dbReference>
<dbReference type="Proteomes" id="UP000002673">
    <property type="component" value="Chromosome"/>
</dbReference>
<dbReference type="GO" id="GO:0005737">
    <property type="term" value="C:cytoplasm"/>
    <property type="evidence" value="ECO:0007669"/>
    <property type="project" value="UniProtKB-SubCell"/>
</dbReference>
<dbReference type="GO" id="GO:0005524">
    <property type="term" value="F:ATP binding"/>
    <property type="evidence" value="ECO:0007669"/>
    <property type="project" value="UniProtKB-UniRule"/>
</dbReference>
<dbReference type="GO" id="GO:0043771">
    <property type="term" value="F:cytidine kinase activity"/>
    <property type="evidence" value="ECO:0007669"/>
    <property type="project" value="RHEA"/>
</dbReference>
<dbReference type="GO" id="GO:0004849">
    <property type="term" value="F:uridine kinase activity"/>
    <property type="evidence" value="ECO:0007669"/>
    <property type="project" value="UniProtKB-UniRule"/>
</dbReference>
<dbReference type="GO" id="GO:0044211">
    <property type="term" value="P:CTP salvage"/>
    <property type="evidence" value="ECO:0007669"/>
    <property type="project" value="UniProtKB-UniRule"/>
</dbReference>
<dbReference type="GO" id="GO:0044206">
    <property type="term" value="P:UMP salvage"/>
    <property type="evidence" value="ECO:0007669"/>
    <property type="project" value="UniProtKB-UniRule"/>
</dbReference>
<dbReference type="CDD" id="cd02023">
    <property type="entry name" value="UMPK"/>
    <property type="match status" value="1"/>
</dbReference>
<dbReference type="FunFam" id="3.40.50.300:FF:000252">
    <property type="entry name" value="Uridine kinase"/>
    <property type="match status" value="1"/>
</dbReference>
<dbReference type="Gene3D" id="3.40.50.300">
    <property type="entry name" value="P-loop containing nucleotide triphosphate hydrolases"/>
    <property type="match status" value="1"/>
</dbReference>
<dbReference type="HAMAP" id="MF_00551">
    <property type="entry name" value="Uridine_kinase"/>
    <property type="match status" value="1"/>
</dbReference>
<dbReference type="InterPro" id="IPR027417">
    <property type="entry name" value="P-loop_NTPase"/>
</dbReference>
<dbReference type="InterPro" id="IPR006083">
    <property type="entry name" value="PRK/URK"/>
</dbReference>
<dbReference type="InterPro" id="IPR026008">
    <property type="entry name" value="Uridine_kinase"/>
</dbReference>
<dbReference type="InterPro" id="IPR000764">
    <property type="entry name" value="Uridine_kinase-like"/>
</dbReference>
<dbReference type="NCBIfam" id="NF004018">
    <property type="entry name" value="PRK05480.1"/>
    <property type="match status" value="1"/>
</dbReference>
<dbReference type="NCBIfam" id="TIGR00235">
    <property type="entry name" value="udk"/>
    <property type="match status" value="1"/>
</dbReference>
<dbReference type="PANTHER" id="PTHR10285">
    <property type="entry name" value="URIDINE KINASE"/>
    <property type="match status" value="1"/>
</dbReference>
<dbReference type="Pfam" id="PF00485">
    <property type="entry name" value="PRK"/>
    <property type="match status" value="1"/>
</dbReference>
<dbReference type="PRINTS" id="PR00988">
    <property type="entry name" value="URIDINKINASE"/>
</dbReference>
<dbReference type="SUPFAM" id="SSF52540">
    <property type="entry name" value="P-loop containing nucleoside triphosphate hydrolases"/>
    <property type="match status" value="1"/>
</dbReference>
<proteinExistence type="inferred from homology"/>
<evidence type="ECO:0000250" key="1"/>
<evidence type="ECO:0000255" key="2"/>
<evidence type="ECO:0000305" key="3"/>
<feature type="chain" id="PRO_0000164487" description="Uridine kinase">
    <location>
        <begin position="1"/>
        <end position="213"/>
    </location>
</feature>
<feature type="binding site" evidence="2">
    <location>
        <begin position="15"/>
        <end position="22"/>
    </location>
    <ligand>
        <name>ATP</name>
        <dbReference type="ChEBI" id="CHEBI:30616"/>
    </ligand>
</feature>